<feature type="chain" id="PRO_1000000429" description="Argininosuccinate synthase">
    <location>
        <begin position="1"/>
        <end position="408"/>
    </location>
</feature>
<feature type="binding site" evidence="1">
    <location>
        <begin position="10"/>
        <end position="18"/>
    </location>
    <ligand>
        <name>ATP</name>
        <dbReference type="ChEBI" id="CHEBI:30616"/>
    </ligand>
</feature>
<feature type="binding site" evidence="1">
    <location>
        <position position="37"/>
    </location>
    <ligand>
        <name>ATP</name>
        <dbReference type="ChEBI" id="CHEBI:30616"/>
    </ligand>
</feature>
<feature type="binding site" evidence="1">
    <location>
        <position position="90"/>
    </location>
    <ligand>
        <name>L-citrulline</name>
        <dbReference type="ChEBI" id="CHEBI:57743"/>
    </ligand>
</feature>
<feature type="binding site" evidence="1">
    <location>
        <position position="95"/>
    </location>
    <ligand>
        <name>L-citrulline</name>
        <dbReference type="ChEBI" id="CHEBI:57743"/>
    </ligand>
</feature>
<feature type="binding site" evidence="1">
    <location>
        <position position="120"/>
    </location>
    <ligand>
        <name>ATP</name>
        <dbReference type="ChEBI" id="CHEBI:30616"/>
    </ligand>
</feature>
<feature type="binding site" evidence="1">
    <location>
        <position position="122"/>
    </location>
    <ligand>
        <name>L-aspartate</name>
        <dbReference type="ChEBI" id="CHEBI:29991"/>
    </ligand>
</feature>
<feature type="binding site" evidence="1">
    <location>
        <position position="126"/>
    </location>
    <ligand>
        <name>L-aspartate</name>
        <dbReference type="ChEBI" id="CHEBI:29991"/>
    </ligand>
</feature>
<feature type="binding site" evidence="1">
    <location>
        <position position="126"/>
    </location>
    <ligand>
        <name>L-citrulline</name>
        <dbReference type="ChEBI" id="CHEBI:57743"/>
    </ligand>
</feature>
<feature type="binding site" evidence="1">
    <location>
        <position position="127"/>
    </location>
    <ligand>
        <name>L-aspartate</name>
        <dbReference type="ChEBI" id="CHEBI:29991"/>
    </ligand>
</feature>
<feature type="binding site" evidence="1">
    <location>
        <position position="130"/>
    </location>
    <ligand>
        <name>L-citrulline</name>
        <dbReference type="ChEBI" id="CHEBI:57743"/>
    </ligand>
</feature>
<feature type="binding site" evidence="1">
    <location>
        <position position="181"/>
    </location>
    <ligand>
        <name>L-citrulline</name>
        <dbReference type="ChEBI" id="CHEBI:57743"/>
    </ligand>
</feature>
<feature type="binding site" evidence="1">
    <location>
        <position position="190"/>
    </location>
    <ligand>
        <name>L-citrulline</name>
        <dbReference type="ChEBI" id="CHEBI:57743"/>
    </ligand>
</feature>
<feature type="binding site" evidence="1">
    <location>
        <position position="266"/>
    </location>
    <ligand>
        <name>L-citrulline</name>
        <dbReference type="ChEBI" id="CHEBI:57743"/>
    </ligand>
</feature>
<feature type="binding site" evidence="1">
    <location>
        <position position="278"/>
    </location>
    <ligand>
        <name>L-citrulline</name>
        <dbReference type="ChEBI" id="CHEBI:57743"/>
    </ligand>
</feature>
<accession>A4WVX3</accession>
<organism>
    <name type="scientific">Cereibacter sphaeroides (strain ATCC 17025 / ATH 2.4.3)</name>
    <name type="common">Rhodobacter sphaeroides</name>
    <dbReference type="NCBI Taxonomy" id="349102"/>
    <lineage>
        <taxon>Bacteria</taxon>
        <taxon>Pseudomonadati</taxon>
        <taxon>Pseudomonadota</taxon>
        <taxon>Alphaproteobacteria</taxon>
        <taxon>Rhodobacterales</taxon>
        <taxon>Paracoccaceae</taxon>
        <taxon>Cereibacter</taxon>
    </lineage>
</organism>
<name>ASSY_CERS5</name>
<dbReference type="EC" id="6.3.4.5" evidence="1"/>
<dbReference type="EMBL" id="CP000661">
    <property type="protein sequence ID" value="ABP71537.1"/>
    <property type="molecule type" value="Genomic_DNA"/>
</dbReference>
<dbReference type="SMR" id="A4WVX3"/>
<dbReference type="STRING" id="349102.Rsph17025_2650"/>
<dbReference type="KEGG" id="rsq:Rsph17025_2650"/>
<dbReference type="eggNOG" id="COG0137">
    <property type="taxonomic scope" value="Bacteria"/>
</dbReference>
<dbReference type="HOGENOM" id="CLU_032784_4_2_5"/>
<dbReference type="BioCyc" id="RSPH349102:G1G8M-2730-MONOMER"/>
<dbReference type="UniPathway" id="UPA00068">
    <property type="reaction ID" value="UER00113"/>
</dbReference>
<dbReference type="GO" id="GO:0005737">
    <property type="term" value="C:cytoplasm"/>
    <property type="evidence" value="ECO:0007669"/>
    <property type="project" value="UniProtKB-SubCell"/>
</dbReference>
<dbReference type="GO" id="GO:0004055">
    <property type="term" value="F:argininosuccinate synthase activity"/>
    <property type="evidence" value="ECO:0007669"/>
    <property type="project" value="UniProtKB-UniRule"/>
</dbReference>
<dbReference type="GO" id="GO:0005524">
    <property type="term" value="F:ATP binding"/>
    <property type="evidence" value="ECO:0007669"/>
    <property type="project" value="UniProtKB-UniRule"/>
</dbReference>
<dbReference type="GO" id="GO:0000053">
    <property type="term" value="P:argininosuccinate metabolic process"/>
    <property type="evidence" value="ECO:0007669"/>
    <property type="project" value="TreeGrafter"/>
</dbReference>
<dbReference type="GO" id="GO:0006526">
    <property type="term" value="P:L-arginine biosynthetic process"/>
    <property type="evidence" value="ECO:0007669"/>
    <property type="project" value="UniProtKB-UniRule"/>
</dbReference>
<dbReference type="GO" id="GO:0000050">
    <property type="term" value="P:urea cycle"/>
    <property type="evidence" value="ECO:0007669"/>
    <property type="project" value="TreeGrafter"/>
</dbReference>
<dbReference type="CDD" id="cd01999">
    <property type="entry name" value="ASS"/>
    <property type="match status" value="1"/>
</dbReference>
<dbReference type="FunFam" id="3.40.50.620:FF:000019">
    <property type="entry name" value="Argininosuccinate synthase"/>
    <property type="match status" value="1"/>
</dbReference>
<dbReference type="FunFam" id="3.90.1260.10:FF:000007">
    <property type="entry name" value="Argininosuccinate synthase"/>
    <property type="match status" value="1"/>
</dbReference>
<dbReference type="Gene3D" id="3.90.1260.10">
    <property type="entry name" value="Argininosuccinate synthetase, chain A, domain 2"/>
    <property type="match status" value="1"/>
</dbReference>
<dbReference type="Gene3D" id="3.40.50.620">
    <property type="entry name" value="HUPs"/>
    <property type="match status" value="1"/>
</dbReference>
<dbReference type="Gene3D" id="1.20.5.470">
    <property type="entry name" value="Single helix bin"/>
    <property type="match status" value="1"/>
</dbReference>
<dbReference type="HAMAP" id="MF_00005">
    <property type="entry name" value="Arg_succ_synth_type1"/>
    <property type="match status" value="1"/>
</dbReference>
<dbReference type="InterPro" id="IPR048268">
    <property type="entry name" value="Arginosuc_syn_C"/>
</dbReference>
<dbReference type="InterPro" id="IPR048267">
    <property type="entry name" value="Arginosuc_syn_N"/>
</dbReference>
<dbReference type="InterPro" id="IPR001518">
    <property type="entry name" value="Arginosuc_synth"/>
</dbReference>
<dbReference type="InterPro" id="IPR018223">
    <property type="entry name" value="Arginosuc_synth_CS"/>
</dbReference>
<dbReference type="InterPro" id="IPR023434">
    <property type="entry name" value="Arginosuc_synth_type_1_subfam"/>
</dbReference>
<dbReference type="InterPro" id="IPR024074">
    <property type="entry name" value="AS_cat/multimer_dom_body"/>
</dbReference>
<dbReference type="InterPro" id="IPR014729">
    <property type="entry name" value="Rossmann-like_a/b/a_fold"/>
</dbReference>
<dbReference type="NCBIfam" id="TIGR00032">
    <property type="entry name" value="argG"/>
    <property type="match status" value="1"/>
</dbReference>
<dbReference type="NCBIfam" id="NF001770">
    <property type="entry name" value="PRK00509.1"/>
    <property type="match status" value="1"/>
</dbReference>
<dbReference type="PANTHER" id="PTHR11587">
    <property type="entry name" value="ARGININOSUCCINATE SYNTHASE"/>
    <property type="match status" value="1"/>
</dbReference>
<dbReference type="PANTHER" id="PTHR11587:SF2">
    <property type="entry name" value="ARGININOSUCCINATE SYNTHASE"/>
    <property type="match status" value="1"/>
</dbReference>
<dbReference type="Pfam" id="PF20979">
    <property type="entry name" value="Arginosuc_syn_C"/>
    <property type="match status" value="1"/>
</dbReference>
<dbReference type="Pfam" id="PF00764">
    <property type="entry name" value="Arginosuc_synth"/>
    <property type="match status" value="1"/>
</dbReference>
<dbReference type="SUPFAM" id="SSF52402">
    <property type="entry name" value="Adenine nucleotide alpha hydrolases-like"/>
    <property type="match status" value="1"/>
</dbReference>
<dbReference type="SUPFAM" id="SSF69864">
    <property type="entry name" value="Argininosuccinate synthetase, C-terminal domain"/>
    <property type="match status" value="1"/>
</dbReference>
<dbReference type="PROSITE" id="PS00564">
    <property type="entry name" value="ARGININOSUCCIN_SYN_1"/>
    <property type="match status" value="1"/>
</dbReference>
<dbReference type="PROSITE" id="PS00565">
    <property type="entry name" value="ARGININOSUCCIN_SYN_2"/>
    <property type="match status" value="1"/>
</dbReference>
<sequence length="408" mass="45321">MSAPKKVVLAYSGGLDTSIILKWLQTEYGCEVVTFTADLGQGEELEPAREKAVMLGIKPDNIFIEDVREEFVRDFVFPMFRANALYEGLYLLGTSIARPLIAKRLVEIAAMTGADAVAHGATGKGNDQVRFELTAYALDPAIKVIAPWREWDLTSRTRLIEFAEQNQIPIAKNKRGEAPFSVDANLLHTSSEGRVLENPGEEAPDYVYQRTVDPEKAPDTPEFVEITFEKGDAVAINGEAMSPATILTRLNELGGKHGVGRLDLVENRFVGMKSRGIYETPGGTILLEAHRGIEQITLDSGAGHLKDSIMPRYAELIYNGFWYSPEREMLQALIDKSQEHVSGTVRVKLYKGFARTVARWSDHSLYSEKHVTFEEDAGAYDQKDAAGFIRLNALRLKLIATRNARVKG</sequence>
<gene>
    <name evidence="1" type="primary">argG</name>
    <name type="ordered locus">Rsph17025_2650</name>
</gene>
<keyword id="KW-0028">Amino-acid biosynthesis</keyword>
<keyword id="KW-0055">Arginine biosynthesis</keyword>
<keyword id="KW-0067">ATP-binding</keyword>
<keyword id="KW-0963">Cytoplasm</keyword>
<keyword id="KW-0436">Ligase</keyword>
<keyword id="KW-0547">Nucleotide-binding</keyword>
<proteinExistence type="inferred from homology"/>
<protein>
    <recommendedName>
        <fullName evidence="1">Argininosuccinate synthase</fullName>
        <ecNumber evidence="1">6.3.4.5</ecNumber>
    </recommendedName>
    <alternativeName>
        <fullName evidence="1">Citrulline--aspartate ligase</fullName>
    </alternativeName>
</protein>
<comment type="catalytic activity">
    <reaction evidence="1">
        <text>L-citrulline + L-aspartate + ATP = 2-(N(omega)-L-arginino)succinate + AMP + diphosphate + H(+)</text>
        <dbReference type="Rhea" id="RHEA:10932"/>
        <dbReference type="ChEBI" id="CHEBI:15378"/>
        <dbReference type="ChEBI" id="CHEBI:29991"/>
        <dbReference type="ChEBI" id="CHEBI:30616"/>
        <dbReference type="ChEBI" id="CHEBI:33019"/>
        <dbReference type="ChEBI" id="CHEBI:57472"/>
        <dbReference type="ChEBI" id="CHEBI:57743"/>
        <dbReference type="ChEBI" id="CHEBI:456215"/>
        <dbReference type="EC" id="6.3.4.5"/>
    </reaction>
</comment>
<comment type="pathway">
    <text evidence="1">Amino-acid biosynthesis; L-arginine biosynthesis; L-arginine from L-ornithine and carbamoyl phosphate: step 2/3.</text>
</comment>
<comment type="subunit">
    <text evidence="1">Homotetramer.</text>
</comment>
<comment type="subcellular location">
    <subcellularLocation>
        <location evidence="1">Cytoplasm</location>
    </subcellularLocation>
</comment>
<comment type="similarity">
    <text evidence="1">Belongs to the argininosuccinate synthase family. Type 1 subfamily.</text>
</comment>
<reference key="1">
    <citation type="submission" date="2007-04" db="EMBL/GenBank/DDBJ databases">
        <title>Complete sequence of chromosome of Rhodobacter sphaeroides ATCC 17025.</title>
        <authorList>
            <consortium name="US DOE Joint Genome Institute"/>
            <person name="Copeland A."/>
            <person name="Lucas S."/>
            <person name="Lapidus A."/>
            <person name="Barry K."/>
            <person name="Detter J.C."/>
            <person name="Glavina del Rio T."/>
            <person name="Hammon N."/>
            <person name="Israni S."/>
            <person name="Dalin E."/>
            <person name="Tice H."/>
            <person name="Pitluck S."/>
            <person name="Chertkov O."/>
            <person name="Brettin T."/>
            <person name="Bruce D."/>
            <person name="Han C."/>
            <person name="Schmutz J."/>
            <person name="Larimer F."/>
            <person name="Land M."/>
            <person name="Hauser L."/>
            <person name="Kyrpides N."/>
            <person name="Kim E."/>
            <person name="Richardson P."/>
            <person name="Mackenzie C."/>
            <person name="Choudhary M."/>
            <person name="Donohue T.J."/>
            <person name="Kaplan S."/>
        </authorList>
    </citation>
    <scope>NUCLEOTIDE SEQUENCE [LARGE SCALE GENOMIC DNA]</scope>
    <source>
        <strain>ATCC 17025 / ATH 2.4.3</strain>
    </source>
</reference>
<evidence type="ECO:0000255" key="1">
    <source>
        <dbReference type="HAMAP-Rule" id="MF_00005"/>
    </source>
</evidence>